<organism>
    <name type="scientific">Synechococcus sp. (strain JA-2-3B'a(2-13))</name>
    <name type="common">Cyanobacteria bacterium Yellowstone B-Prime</name>
    <dbReference type="NCBI Taxonomy" id="321332"/>
    <lineage>
        <taxon>Bacteria</taxon>
        <taxon>Bacillati</taxon>
        <taxon>Cyanobacteriota</taxon>
        <taxon>Cyanophyceae</taxon>
        <taxon>Synechococcales</taxon>
        <taxon>Synechococcaceae</taxon>
        <taxon>Synechococcus</taxon>
    </lineage>
</organism>
<evidence type="ECO:0000250" key="1"/>
<evidence type="ECO:0000255" key="2">
    <source>
        <dbReference type="HAMAP-Rule" id="MF_00223"/>
    </source>
</evidence>
<evidence type="ECO:0000256" key="3">
    <source>
        <dbReference type="SAM" id="MobiDB-lite"/>
    </source>
</evidence>
<name>GCH1_SYNJB</name>
<accession>Q2JPT8</accession>
<protein>
    <recommendedName>
        <fullName evidence="2">GTP cyclohydrolase 1</fullName>
        <ecNumber evidence="2">3.5.4.16</ecNumber>
    </recommendedName>
    <alternativeName>
        <fullName evidence="2">GTP cyclohydrolase I</fullName>
        <shortName evidence="2">GTP-CH-I</shortName>
    </alternativeName>
</protein>
<keyword id="KW-0342">GTP-binding</keyword>
<keyword id="KW-0378">Hydrolase</keyword>
<keyword id="KW-0479">Metal-binding</keyword>
<keyword id="KW-0547">Nucleotide-binding</keyword>
<keyword id="KW-0554">One-carbon metabolism</keyword>
<keyword id="KW-1185">Reference proteome</keyword>
<keyword id="KW-0862">Zinc</keyword>
<reference key="1">
    <citation type="journal article" date="2007" name="ISME J.">
        <title>Population level functional diversity in a microbial community revealed by comparative genomic and metagenomic analyses.</title>
        <authorList>
            <person name="Bhaya D."/>
            <person name="Grossman A.R."/>
            <person name="Steunou A.-S."/>
            <person name="Khuri N."/>
            <person name="Cohan F.M."/>
            <person name="Hamamura N."/>
            <person name="Melendrez M.C."/>
            <person name="Bateson M.M."/>
            <person name="Ward D.M."/>
            <person name="Heidelberg J.F."/>
        </authorList>
    </citation>
    <scope>NUCLEOTIDE SEQUENCE [LARGE SCALE GENOMIC DNA]</scope>
    <source>
        <strain>JA-2-3B'a(2-13)</strain>
    </source>
</reference>
<proteinExistence type="inferred from homology"/>
<feature type="chain" id="PRO_1000043753" description="GTP cyclohydrolase 1">
    <location>
        <begin position="1"/>
        <end position="229"/>
    </location>
</feature>
<feature type="region of interest" description="Disordered" evidence="3">
    <location>
        <begin position="1"/>
        <end position="21"/>
    </location>
</feature>
<feature type="binding site" evidence="2">
    <location>
        <position position="116"/>
    </location>
    <ligand>
        <name>Zn(2+)</name>
        <dbReference type="ChEBI" id="CHEBI:29105"/>
    </ligand>
</feature>
<feature type="binding site" evidence="2">
    <location>
        <position position="119"/>
    </location>
    <ligand>
        <name>Zn(2+)</name>
        <dbReference type="ChEBI" id="CHEBI:29105"/>
    </ligand>
</feature>
<feature type="binding site" evidence="2">
    <location>
        <position position="187"/>
    </location>
    <ligand>
        <name>Zn(2+)</name>
        <dbReference type="ChEBI" id="CHEBI:29105"/>
    </ligand>
</feature>
<comment type="catalytic activity">
    <reaction evidence="2">
        <text>GTP + H2O = 7,8-dihydroneopterin 3'-triphosphate + formate + H(+)</text>
        <dbReference type="Rhea" id="RHEA:17473"/>
        <dbReference type="ChEBI" id="CHEBI:15377"/>
        <dbReference type="ChEBI" id="CHEBI:15378"/>
        <dbReference type="ChEBI" id="CHEBI:15740"/>
        <dbReference type="ChEBI" id="CHEBI:37565"/>
        <dbReference type="ChEBI" id="CHEBI:58462"/>
        <dbReference type="EC" id="3.5.4.16"/>
    </reaction>
</comment>
<comment type="pathway">
    <text evidence="2">Cofactor biosynthesis; 7,8-dihydroneopterin triphosphate biosynthesis; 7,8-dihydroneopterin triphosphate from GTP: step 1/1.</text>
</comment>
<comment type="subunit">
    <text evidence="1">Toroid-shaped homodecamer, composed of two pentamers of five dimers.</text>
</comment>
<comment type="similarity">
    <text evidence="2">Belongs to the GTP cyclohydrolase I family.</text>
</comment>
<sequence length="229" mass="25658">MTLAKPGSGSQSRMDDKAHFKSRVIRDRATFAEEELGSSDVSDPAMVAAVETLLRGIGEDPQREGLRKTPERVVAALKFLTSGYRQSLEELLNSAIFDEGHDEMVLLRDVSLFSLCEHHLLPFIGKAHVAYIPKQKVVGLSKIARIVEMYSRRLQVQERLTRQIAEALMEVLDPYGVGVVIEATHMCMVMRGVQKAGSWTVTSSMVGVFQEDPRTREEFLSLIRHPSNF</sequence>
<gene>
    <name evidence="2" type="primary">folE</name>
    <name type="ordered locus">CYB_0188</name>
</gene>
<dbReference type="EC" id="3.5.4.16" evidence="2"/>
<dbReference type="EMBL" id="CP000240">
    <property type="protein sequence ID" value="ABD01188.1"/>
    <property type="molecule type" value="Genomic_DNA"/>
</dbReference>
<dbReference type="SMR" id="Q2JPT8"/>
<dbReference type="STRING" id="321332.CYB_0188"/>
<dbReference type="KEGG" id="cyb:CYB_0188"/>
<dbReference type="eggNOG" id="COG0302">
    <property type="taxonomic scope" value="Bacteria"/>
</dbReference>
<dbReference type="HOGENOM" id="CLU_049768_3_1_3"/>
<dbReference type="OrthoDB" id="9801207at2"/>
<dbReference type="UniPathway" id="UPA00848">
    <property type="reaction ID" value="UER00151"/>
</dbReference>
<dbReference type="Proteomes" id="UP000001938">
    <property type="component" value="Chromosome"/>
</dbReference>
<dbReference type="GO" id="GO:0005737">
    <property type="term" value="C:cytoplasm"/>
    <property type="evidence" value="ECO:0007669"/>
    <property type="project" value="TreeGrafter"/>
</dbReference>
<dbReference type="GO" id="GO:0005525">
    <property type="term" value="F:GTP binding"/>
    <property type="evidence" value="ECO:0007669"/>
    <property type="project" value="UniProtKB-KW"/>
</dbReference>
<dbReference type="GO" id="GO:0003934">
    <property type="term" value="F:GTP cyclohydrolase I activity"/>
    <property type="evidence" value="ECO:0007669"/>
    <property type="project" value="UniProtKB-UniRule"/>
</dbReference>
<dbReference type="GO" id="GO:0008270">
    <property type="term" value="F:zinc ion binding"/>
    <property type="evidence" value="ECO:0007669"/>
    <property type="project" value="UniProtKB-UniRule"/>
</dbReference>
<dbReference type="GO" id="GO:0006730">
    <property type="term" value="P:one-carbon metabolic process"/>
    <property type="evidence" value="ECO:0007669"/>
    <property type="project" value="UniProtKB-UniRule"/>
</dbReference>
<dbReference type="GO" id="GO:0006729">
    <property type="term" value="P:tetrahydrobiopterin biosynthetic process"/>
    <property type="evidence" value="ECO:0007669"/>
    <property type="project" value="TreeGrafter"/>
</dbReference>
<dbReference type="GO" id="GO:0046654">
    <property type="term" value="P:tetrahydrofolate biosynthetic process"/>
    <property type="evidence" value="ECO:0007669"/>
    <property type="project" value="UniProtKB-UniRule"/>
</dbReference>
<dbReference type="CDD" id="cd00642">
    <property type="entry name" value="GTP_cyclohydro1"/>
    <property type="match status" value="1"/>
</dbReference>
<dbReference type="FunFam" id="3.30.1130.10:FF:000012">
    <property type="entry name" value="GTP cyclohydrolase 1"/>
    <property type="match status" value="1"/>
</dbReference>
<dbReference type="Gene3D" id="1.10.286.10">
    <property type="match status" value="1"/>
</dbReference>
<dbReference type="Gene3D" id="3.30.1130.10">
    <property type="match status" value="1"/>
</dbReference>
<dbReference type="HAMAP" id="MF_00223">
    <property type="entry name" value="FolE"/>
    <property type="match status" value="1"/>
</dbReference>
<dbReference type="InterPro" id="IPR043133">
    <property type="entry name" value="GTP-CH-I_C/QueF"/>
</dbReference>
<dbReference type="InterPro" id="IPR043134">
    <property type="entry name" value="GTP-CH-I_N"/>
</dbReference>
<dbReference type="InterPro" id="IPR001474">
    <property type="entry name" value="GTP_CycHdrlase_I"/>
</dbReference>
<dbReference type="InterPro" id="IPR018234">
    <property type="entry name" value="GTP_CycHdrlase_I_CS"/>
</dbReference>
<dbReference type="InterPro" id="IPR020602">
    <property type="entry name" value="GTP_CycHdrlase_I_dom"/>
</dbReference>
<dbReference type="NCBIfam" id="TIGR00063">
    <property type="entry name" value="folE"/>
    <property type="match status" value="1"/>
</dbReference>
<dbReference type="NCBIfam" id="NF006825">
    <property type="entry name" value="PRK09347.1-2"/>
    <property type="match status" value="1"/>
</dbReference>
<dbReference type="NCBIfam" id="NF006826">
    <property type="entry name" value="PRK09347.1-3"/>
    <property type="match status" value="1"/>
</dbReference>
<dbReference type="PANTHER" id="PTHR11109:SF7">
    <property type="entry name" value="GTP CYCLOHYDROLASE 1"/>
    <property type="match status" value="1"/>
</dbReference>
<dbReference type="PANTHER" id="PTHR11109">
    <property type="entry name" value="GTP CYCLOHYDROLASE I"/>
    <property type="match status" value="1"/>
</dbReference>
<dbReference type="Pfam" id="PF01227">
    <property type="entry name" value="GTP_cyclohydroI"/>
    <property type="match status" value="1"/>
</dbReference>
<dbReference type="SUPFAM" id="SSF55620">
    <property type="entry name" value="Tetrahydrobiopterin biosynthesis enzymes-like"/>
    <property type="match status" value="1"/>
</dbReference>
<dbReference type="PROSITE" id="PS00859">
    <property type="entry name" value="GTP_CYCLOHYDROL_1_1"/>
    <property type="match status" value="1"/>
</dbReference>
<dbReference type="PROSITE" id="PS00860">
    <property type="entry name" value="GTP_CYCLOHYDROL_1_2"/>
    <property type="match status" value="1"/>
</dbReference>